<gene>
    <name evidence="2" type="primary">trmB</name>
    <name type="ordered locus">CD630_19420</name>
</gene>
<comment type="function">
    <text evidence="2">Catalyzes the formation of N(7)-methylguanine at position 46 (m7G46) in tRNA.</text>
</comment>
<comment type="catalytic activity">
    <reaction evidence="2">
        <text>guanosine(46) in tRNA + S-adenosyl-L-methionine = N(7)-methylguanosine(46) in tRNA + S-adenosyl-L-homocysteine</text>
        <dbReference type="Rhea" id="RHEA:42708"/>
        <dbReference type="Rhea" id="RHEA-COMP:10188"/>
        <dbReference type="Rhea" id="RHEA-COMP:10189"/>
        <dbReference type="ChEBI" id="CHEBI:57856"/>
        <dbReference type="ChEBI" id="CHEBI:59789"/>
        <dbReference type="ChEBI" id="CHEBI:74269"/>
        <dbReference type="ChEBI" id="CHEBI:74480"/>
        <dbReference type="EC" id="2.1.1.33"/>
    </reaction>
</comment>
<comment type="pathway">
    <text evidence="2">tRNA modification; N(7)-methylguanine-tRNA biosynthesis.</text>
</comment>
<comment type="similarity">
    <text evidence="2">Belongs to the class I-like SAM-binding methyltransferase superfamily. TrmB family.</text>
</comment>
<proteinExistence type="inferred from homology"/>
<accession>Q187Q1</accession>
<name>TRMB_CLOD6</name>
<reference key="1">
    <citation type="journal article" date="2006" name="Nat. Genet.">
        <title>The multidrug-resistant human pathogen Clostridium difficile has a highly mobile, mosaic genome.</title>
        <authorList>
            <person name="Sebaihia M."/>
            <person name="Wren B.W."/>
            <person name="Mullany P."/>
            <person name="Fairweather N.F."/>
            <person name="Minton N."/>
            <person name="Stabler R."/>
            <person name="Thomson N.R."/>
            <person name="Roberts A.P."/>
            <person name="Cerdeno-Tarraga A.M."/>
            <person name="Wang H."/>
            <person name="Holden M.T.G."/>
            <person name="Wright A."/>
            <person name="Churcher C."/>
            <person name="Quail M.A."/>
            <person name="Baker S."/>
            <person name="Bason N."/>
            <person name="Brooks K."/>
            <person name="Chillingworth T."/>
            <person name="Cronin A."/>
            <person name="Davis P."/>
            <person name="Dowd L."/>
            <person name="Fraser A."/>
            <person name="Feltwell T."/>
            <person name="Hance Z."/>
            <person name="Holroyd S."/>
            <person name="Jagels K."/>
            <person name="Moule S."/>
            <person name="Mungall K."/>
            <person name="Price C."/>
            <person name="Rabbinowitsch E."/>
            <person name="Sharp S."/>
            <person name="Simmonds M."/>
            <person name="Stevens K."/>
            <person name="Unwin L."/>
            <person name="Whithead S."/>
            <person name="Dupuy B."/>
            <person name="Dougan G."/>
            <person name="Barrell B."/>
            <person name="Parkhill J."/>
        </authorList>
    </citation>
    <scope>NUCLEOTIDE SEQUENCE [LARGE SCALE GENOMIC DNA]</scope>
    <source>
        <strain>630</strain>
    </source>
</reference>
<feature type="chain" id="PRO_0000288138" description="tRNA (guanine-N(7)-)-methyltransferase">
    <location>
        <begin position="1"/>
        <end position="214"/>
    </location>
</feature>
<feature type="active site" evidence="1">
    <location>
        <position position="119"/>
    </location>
</feature>
<feature type="binding site" evidence="2">
    <location>
        <position position="45"/>
    </location>
    <ligand>
        <name>S-adenosyl-L-methionine</name>
        <dbReference type="ChEBI" id="CHEBI:59789"/>
    </ligand>
</feature>
<feature type="binding site" evidence="2">
    <location>
        <position position="70"/>
    </location>
    <ligand>
        <name>S-adenosyl-L-methionine</name>
        <dbReference type="ChEBI" id="CHEBI:59789"/>
    </ligand>
</feature>
<feature type="binding site" evidence="2">
    <location>
        <position position="97"/>
    </location>
    <ligand>
        <name>S-adenosyl-L-methionine</name>
        <dbReference type="ChEBI" id="CHEBI:59789"/>
    </ligand>
</feature>
<feature type="binding site" evidence="2">
    <location>
        <position position="119"/>
    </location>
    <ligand>
        <name>S-adenosyl-L-methionine</name>
        <dbReference type="ChEBI" id="CHEBI:59789"/>
    </ligand>
</feature>
<feature type="binding site" evidence="2">
    <location>
        <position position="123"/>
    </location>
    <ligand>
        <name>substrate</name>
    </ligand>
</feature>
<feature type="binding site" evidence="2">
    <location>
        <position position="155"/>
    </location>
    <ligand>
        <name>substrate</name>
    </ligand>
</feature>
<feature type="binding site" evidence="2">
    <location>
        <begin position="192"/>
        <end position="195"/>
    </location>
    <ligand>
        <name>substrate</name>
    </ligand>
</feature>
<organism>
    <name type="scientific">Clostridioides difficile (strain 630)</name>
    <name type="common">Peptoclostridium difficile</name>
    <dbReference type="NCBI Taxonomy" id="272563"/>
    <lineage>
        <taxon>Bacteria</taxon>
        <taxon>Bacillati</taxon>
        <taxon>Bacillota</taxon>
        <taxon>Clostridia</taxon>
        <taxon>Peptostreptococcales</taxon>
        <taxon>Peptostreptococcaceae</taxon>
        <taxon>Clostridioides</taxon>
    </lineage>
</organism>
<dbReference type="EC" id="2.1.1.33" evidence="2"/>
<dbReference type="EMBL" id="AM180355">
    <property type="protein sequence ID" value="CAJ68817.2"/>
    <property type="molecule type" value="Genomic_DNA"/>
</dbReference>
<dbReference type="RefSeq" id="WP_009889910.1">
    <property type="nucleotide sequence ID" value="NZ_JAUPES010000023.1"/>
</dbReference>
<dbReference type="RefSeq" id="YP_001088448.2">
    <property type="nucleotide sequence ID" value="NC_009089.1"/>
</dbReference>
<dbReference type="SMR" id="Q187Q1"/>
<dbReference type="STRING" id="272563.CD630_19420"/>
<dbReference type="EnsemblBacteria" id="CAJ68817">
    <property type="protein sequence ID" value="CAJ68817"/>
    <property type="gene ID" value="CD630_19420"/>
</dbReference>
<dbReference type="GeneID" id="66354328"/>
<dbReference type="KEGG" id="cdf:CD630_19420"/>
<dbReference type="KEGG" id="pdc:CDIF630_02147"/>
<dbReference type="PATRIC" id="fig|272563.120.peg.2039"/>
<dbReference type="eggNOG" id="COG0220">
    <property type="taxonomic scope" value="Bacteria"/>
</dbReference>
<dbReference type="OrthoDB" id="9802090at2"/>
<dbReference type="PhylomeDB" id="Q187Q1"/>
<dbReference type="BioCyc" id="PDIF272563:G12WB-2085-MONOMER"/>
<dbReference type="UniPathway" id="UPA00989"/>
<dbReference type="Proteomes" id="UP000001978">
    <property type="component" value="Chromosome"/>
</dbReference>
<dbReference type="GO" id="GO:0043527">
    <property type="term" value="C:tRNA methyltransferase complex"/>
    <property type="evidence" value="ECO:0007669"/>
    <property type="project" value="TreeGrafter"/>
</dbReference>
<dbReference type="GO" id="GO:0008176">
    <property type="term" value="F:tRNA (guanine(46)-N7)-methyltransferase activity"/>
    <property type="evidence" value="ECO:0007669"/>
    <property type="project" value="UniProtKB-UniRule"/>
</dbReference>
<dbReference type="FunFam" id="3.40.50.150:FF:000035">
    <property type="entry name" value="tRNA (guanine-N(7)-)-methyltransferase"/>
    <property type="match status" value="1"/>
</dbReference>
<dbReference type="Gene3D" id="3.40.50.150">
    <property type="entry name" value="Vaccinia Virus protein VP39"/>
    <property type="match status" value="1"/>
</dbReference>
<dbReference type="HAMAP" id="MF_01057">
    <property type="entry name" value="tRNA_methyltr_TrmB"/>
    <property type="match status" value="1"/>
</dbReference>
<dbReference type="InterPro" id="IPR029063">
    <property type="entry name" value="SAM-dependent_MTases_sf"/>
</dbReference>
<dbReference type="InterPro" id="IPR003358">
    <property type="entry name" value="tRNA_(Gua-N-7)_MeTrfase_Trmb"/>
</dbReference>
<dbReference type="InterPro" id="IPR055361">
    <property type="entry name" value="tRNA_methyltr_TrmB_bact"/>
</dbReference>
<dbReference type="NCBIfam" id="NF001080">
    <property type="entry name" value="PRK00121.2-2"/>
    <property type="match status" value="1"/>
</dbReference>
<dbReference type="NCBIfam" id="TIGR00091">
    <property type="entry name" value="tRNA (guanosine(46)-N7)-methyltransferase TrmB"/>
    <property type="match status" value="1"/>
</dbReference>
<dbReference type="PANTHER" id="PTHR23417">
    <property type="entry name" value="3-DEOXY-D-MANNO-OCTULOSONIC-ACID TRANSFERASE/TRNA GUANINE-N 7 - -METHYLTRANSFERASE"/>
    <property type="match status" value="1"/>
</dbReference>
<dbReference type="PANTHER" id="PTHR23417:SF14">
    <property type="entry name" value="PENTACOTRIPEPTIDE-REPEAT REGION OF PRORP DOMAIN-CONTAINING PROTEIN"/>
    <property type="match status" value="1"/>
</dbReference>
<dbReference type="Pfam" id="PF02390">
    <property type="entry name" value="Methyltransf_4"/>
    <property type="match status" value="1"/>
</dbReference>
<dbReference type="SUPFAM" id="SSF53335">
    <property type="entry name" value="S-adenosyl-L-methionine-dependent methyltransferases"/>
    <property type="match status" value="1"/>
</dbReference>
<dbReference type="PROSITE" id="PS51625">
    <property type="entry name" value="SAM_MT_TRMB"/>
    <property type="match status" value="1"/>
</dbReference>
<protein>
    <recommendedName>
        <fullName evidence="2">tRNA (guanine-N(7)-)-methyltransferase</fullName>
        <ecNumber evidence="2">2.1.1.33</ecNumber>
    </recommendedName>
    <alternativeName>
        <fullName evidence="2">tRNA (guanine(46)-N(7))-methyltransferase</fullName>
    </alternativeName>
    <alternativeName>
        <fullName evidence="2">tRNA(m7G46)-methyltransferase</fullName>
    </alternativeName>
</protein>
<evidence type="ECO:0000250" key="1"/>
<evidence type="ECO:0000255" key="2">
    <source>
        <dbReference type="HAMAP-Rule" id="MF_01057"/>
    </source>
</evidence>
<keyword id="KW-0489">Methyltransferase</keyword>
<keyword id="KW-1185">Reference proteome</keyword>
<keyword id="KW-0949">S-adenosyl-L-methionine</keyword>
<keyword id="KW-0808">Transferase</keyword>
<keyword id="KW-0819">tRNA processing</keyword>
<sequence>MRRRRKKGADEKLLSYTKYVLRDDIDKLKGKWNLKFRNDNPIHVEFGTGKGKFITTLAKQNPDINYIAMELKEEVLLKAVEKADASNLNNILFLWGDVSNILDYFEAKELSRIYINFCDPWPKNRWSKRRLTHSGFLEMYNRVLEDDGEIHFKTDNEKLFEFSLNEIAANNWLLKNISLDLGNSEYENNVTTEYEDKFMSQGMRIFRCEAKKRN</sequence>